<proteinExistence type="evidence at protein level"/>
<dbReference type="EC" id="1.4.1.3"/>
<dbReference type="GO" id="GO:0005737">
    <property type="term" value="C:cytoplasm"/>
    <property type="evidence" value="ECO:0007669"/>
    <property type="project" value="UniProtKB-SubCell"/>
</dbReference>
<dbReference type="GO" id="GO:0004352">
    <property type="term" value="F:glutamate dehydrogenase (NAD+) activity"/>
    <property type="evidence" value="ECO:0007669"/>
    <property type="project" value="RHEA"/>
</dbReference>
<dbReference type="GO" id="GO:0004354">
    <property type="term" value="F:glutamate dehydrogenase (NADP+) activity"/>
    <property type="evidence" value="ECO:0007669"/>
    <property type="project" value="RHEA"/>
</dbReference>
<name>DHE3_PYRWO</name>
<organism>
    <name type="scientific">Pyrococcus woesei</name>
    <dbReference type="NCBI Taxonomy" id="2262"/>
    <lineage>
        <taxon>Archaea</taxon>
        <taxon>Methanobacteriati</taxon>
        <taxon>Methanobacteriota</taxon>
        <taxon>Thermococci</taxon>
        <taxon>Thermococcales</taxon>
        <taxon>Thermococcaceae</taxon>
        <taxon>Pyrococcus</taxon>
    </lineage>
</organism>
<reference key="1">
    <citation type="journal article" date="1993" name="Gene">
        <title>The glutamate dehydrogenase-encoding gene of the hyperthermophilic archaeon Pyrococcus furiosus: sequence, transcription and analysis of the deduced amino acid sequence.</title>
        <authorList>
            <person name="Eggen R.I.L."/>
            <person name="Geerling A.C.M."/>
            <person name="Waldkoetter K."/>
            <person name="Antranikian G."/>
            <person name="de Vos W.M."/>
        </authorList>
    </citation>
    <scope>PROTEIN SEQUENCE</scope>
</reference>
<gene>
    <name type="primary">gdhA</name>
    <name type="synonym">gdh</name>
</gene>
<feature type="chain" id="PRO_0000182760" description="Glutamate dehydrogenase">
    <location>
        <begin position="1"/>
        <end position="24" status="greater than"/>
    </location>
</feature>
<feature type="non-terminal residue">
    <location>
        <position position="24"/>
    </location>
</feature>
<sequence length="24" mass="2882">VEQDPYEIVIKQLERAAQYMEISE</sequence>
<comment type="catalytic activity">
    <reaction evidence="2">
        <text>L-glutamate + NAD(+) + H2O = 2-oxoglutarate + NH4(+) + NADH + H(+)</text>
        <dbReference type="Rhea" id="RHEA:15133"/>
        <dbReference type="ChEBI" id="CHEBI:15377"/>
        <dbReference type="ChEBI" id="CHEBI:15378"/>
        <dbReference type="ChEBI" id="CHEBI:16810"/>
        <dbReference type="ChEBI" id="CHEBI:28938"/>
        <dbReference type="ChEBI" id="CHEBI:29985"/>
        <dbReference type="ChEBI" id="CHEBI:57540"/>
        <dbReference type="ChEBI" id="CHEBI:57945"/>
        <dbReference type="EC" id="1.4.1.3"/>
    </reaction>
</comment>
<comment type="catalytic activity">
    <reaction evidence="2">
        <text>L-glutamate + NADP(+) + H2O = 2-oxoglutarate + NH4(+) + NADPH + H(+)</text>
        <dbReference type="Rhea" id="RHEA:11612"/>
        <dbReference type="ChEBI" id="CHEBI:15377"/>
        <dbReference type="ChEBI" id="CHEBI:15378"/>
        <dbReference type="ChEBI" id="CHEBI:16810"/>
        <dbReference type="ChEBI" id="CHEBI:28938"/>
        <dbReference type="ChEBI" id="CHEBI:29985"/>
        <dbReference type="ChEBI" id="CHEBI:57783"/>
        <dbReference type="ChEBI" id="CHEBI:58349"/>
        <dbReference type="EC" id="1.4.1.3"/>
    </reaction>
</comment>
<comment type="subunit">
    <text evidence="1">Homohexamer.</text>
</comment>
<comment type="subcellular location">
    <subcellularLocation>
        <location>Cytoplasm</location>
    </subcellularLocation>
</comment>
<comment type="similarity">
    <text evidence="3">Belongs to the Glu/Leu/Phe/Val dehydrogenases family.</text>
</comment>
<accession>Q09115</accession>
<keyword id="KW-0963">Cytoplasm</keyword>
<keyword id="KW-0903">Direct protein sequencing</keyword>
<keyword id="KW-0520">NAD</keyword>
<keyword id="KW-0521">NADP</keyword>
<keyword id="KW-0560">Oxidoreductase</keyword>
<protein>
    <recommendedName>
        <fullName>Glutamate dehydrogenase</fullName>
        <shortName>GDH</shortName>
        <ecNumber>1.4.1.3</ecNumber>
    </recommendedName>
</protein>
<evidence type="ECO:0000250" key="1"/>
<evidence type="ECO:0000255" key="2">
    <source>
        <dbReference type="PROSITE-ProRule" id="PRU10011"/>
    </source>
</evidence>
<evidence type="ECO:0000305" key="3"/>